<accession>Q6GLZ1</accession>
<feature type="chain" id="PRO_0000130605" description="Density-regulated protein">
    <location>
        <begin position="1"/>
        <end position="198"/>
    </location>
</feature>
<feature type="domain" description="SUI1" evidence="2">
    <location>
        <begin position="115"/>
        <end position="182"/>
    </location>
</feature>
<feature type="region of interest" description="Disordered" evidence="3">
    <location>
        <begin position="76"/>
        <end position="110"/>
    </location>
</feature>
<feature type="compositionally biased region" description="Polar residues" evidence="3">
    <location>
        <begin position="77"/>
        <end position="87"/>
    </location>
</feature>
<feature type="compositionally biased region" description="Basic residues" evidence="3">
    <location>
        <begin position="95"/>
        <end position="110"/>
    </location>
</feature>
<comment type="function">
    <text evidence="1">May be involved in the translation of target mRNAs by scanning and recognition of the initiation codon. Involved in translation initiation; promotes recruitment of aminoacetyled initiator tRNA to P site of 40S ribosomes. Can promote release of deacylated tRNA and mRNA from recycled 40S subunits following ABCE1-mediated dissociation of post-termination ribosomal complexes into subunits (By similarity).</text>
</comment>
<comment type="similarity">
    <text evidence="4">Belongs to the DENR family.</text>
</comment>
<proteinExistence type="evidence at transcript level"/>
<organism>
    <name type="scientific">Xenopus laevis</name>
    <name type="common">African clawed frog</name>
    <dbReference type="NCBI Taxonomy" id="8355"/>
    <lineage>
        <taxon>Eukaryota</taxon>
        <taxon>Metazoa</taxon>
        <taxon>Chordata</taxon>
        <taxon>Craniata</taxon>
        <taxon>Vertebrata</taxon>
        <taxon>Euteleostomi</taxon>
        <taxon>Amphibia</taxon>
        <taxon>Batrachia</taxon>
        <taxon>Anura</taxon>
        <taxon>Pipoidea</taxon>
        <taxon>Pipidae</taxon>
        <taxon>Xenopodinae</taxon>
        <taxon>Xenopus</taxon>
        <taxon>Xenopus</taxon>
    </lineage>
</organism>
<name>DENR_XENLA</name>
<evidence type="ECO:0000250" key="1"/>
<evidence type="ECO:0000255" key="2">
    <source>
        <dbReference type="PROSITE-ProRule" id="PRU00200"/>
    </source>
</evidence>
<evidence type="ECO:0000256" key="3">
    <source>
        <dbReference type="SAM" id="MobiDB-lite"/>
    </source>
</evidence>
<evidence type="ECO:0000305" key="4"/>
<protein>
    <recommendedName>
        <fullName>Density-regulated protein</fullName>
        <shortName>DRP</shortName>
    </recommendedName>
</protein>
<reference key="1">
    <citation type="submission" date="2004-06" db="EMBL/GenBank/DDBJ databases">
        <authorList>
            <consortium name="NIH - Xenopus Gene Collection (XGC) project"/>
        </authorList>
    </citation>
    <scope>NUCLEOTIDE SEQUENCE [LARGE SCALE MRNA]</scope>
    <source>
        <tissue>Brain</tissue>
    </source>
</reference>
<gene>
    <name type="primary">denr</name>
</gene>
<dbReference type="EMBL" id="BC074302">
    <property type="protein sequence ID" value="AAH74302.1"/>
    <property type="molecule type" value="mRNA"/>
</dbReference>
<dbReference type="RefSeq" id="NP_001086186.1">
    <property type="nucleotide sequence ID" value="NM_001092717.1"/>
</dbReference>
<dbReference type="SMR" id="Q6GLZ1"/>
<dbReference type="BioGRID" id="102778">
    <property type="interactions" value="1"/>
</dbReference>
<dbReference type="IntAct" id="Q6GLZ1">
    <property type="interactions" value="1"/>
</dbReference>
<dbReference type="DNASU" id="444615"/>
<dbReference type="GeneID" id="444615"/>
<dbReference type="KEGG" id="xla:444615"/>
<dbReference type="AGR" id="Xenbase:XB-GENE-1002805"/>
<dbReference type="CTD" id="444615"/>
<dbReference type="Xenbase" id="XB-GENE-1002805">
    <property type="gene designation" value="denr.L"/>
</dbReference>
<dbReference type="OrthoDB" id="277199at2759"/>
<dbReference type="CD-CODE" id="78E86D56">
    <property type="entry name" value="Mitochondrial cloud"/>
</dbReference>
<dbReference type="Proteomes" id="UP000186698">
    <property type="component" value="Chromosome 1L"/>
</dbReference>
<dbReference type="Bgee" id="444615">
    <property type="expression patterns" value="Expressed in pancreas and 19 other cell types or tissues"/>
</dbReference>
<dbReference type="GO" id="GO:0003729">
    <property type="term" value="F:mRNA binding"/>
    <property type="evidence" value="ECO:0007669"/>
    <property type="project" value="TreeGrafter"/>
</dbReference>
<dbReference type="GO" id="GO:0003743">
    <property type="term" value="F:translation initiation factor activity"/>
    <property type="evidence" value="ECO:0007669"/>
    <property type="project" value="UniProtKB-KW"/>
</dbReference>
<dbReference type="GO" id="GO:0001731">
    <property type="term" value="P:formation of translation preinitiation complex"/>
    <property type="evidence" value="ECO:0000318"/>
    <property type="project" value="GO_Central"/>
</dbReference>
<dbReference type="GO" id="GO:0002188">
    <property type="term" value="P:translation reinitiation"/>
    <property type="evidence" value="ECO:0000318"/>
    <property type="project" value="GO_Central"/>
</dbReference>
<dbReference type="CDD" id="cd11607">
    <property type="entry name" value="DENR_C"/>
    <property type="match status" value="1"/>
</dbReference>
<dbReference type="FunFam" id="3.30.780.10:FF:000004">
    <property type="entry name" value="density-regulated protein-like"/>
    <property type="match status" value="1"/>
</dbReference>
<dbReference type="Gene3D" id="3.30.780.10">
    <property type="entry name" value="SUI1-like domain"/>
    <property type="match status" value="1"/>
</dbReference>
<dbReference type="InterPro" id="IPR050318">
    <property type="entry name" value="DENR/SUI1_TIF"/>
</dbReference>
<dbReference type="InterPro" id="IPR046447">
    <property type="entry name" value="DENR_C"/>
</dbReference>
<dbReference type="InterPro" id="IPR005873">
    <property type="entry name" value="DENR_eukaryotes"/>
</dbReference>
<dbReference type="InterPro" id="IPR048517">
    <property type="entry name" value="DENR_N"/>
</dbReference>
<dbReference type="InterPro" id="IPR001950">
    <property type="entry name" value="SUI1"/>
</dbReference>
<dbReference type="InterPro" id="IPR036877">
    <property type="entry name" value="SUI1_dom_sf"/>
</dbReference>
<dbReference type="NCBIfam" id="TIGR01159">
    <property type="entry name" value="DRP1"/>
    <property type="match status" value="1"/>
</dbReference>
<dbReference type="PANTHER" id="PTHR12789:SF0">
    <property type="entry name" value="DENSITY-REGULATED PROTEIN"/>
    <property type="match status" value="1"/>
</dbReference>
<dbReference type="PANTHER" id="PTHR12789">
    <property type="entry name" value="DENSITY-REGULATED PROTEIN HOMOLOG"/>
    <property type="match status" value="1"/>
</dbReference>
<dbReference type="Pfam" id="PF21023">
    <property type="entry name" value="DENR_N"/>
    <property type="match status" value="1"/>
</dbReference>
<dbReference type="Pfam" id="PF01253">
    <property type="entry name" value="SUI1"/>
    <property type="match status" value="1"/>
</dbReference>
<dbReference type="SUPFAM" id="SSF55159">
    <property type="entry name" value="eIF1-like"/>
    <property type="match status" value="1"/>
</dbReference>
<dbReference type="PROSITE" id="PS50296">
    <property type="entry name" value="SUI1"/>
    <property type="match status" value="1"/>
</dbReference>
<keyword id="KW-0396">Initiation factor</keyword>
<keyword id="KW-0648">Protein biosynthesis</keyword>
<keyword id="KW-1185">Reference proteome</keyword>
<sequence>MASTAIENAEPSDCKADLKIPKIDGDFPLKVLYCGVCSLPTEYCEYMPDVAKCRQWLEKNFPDVFAKLTLGHIPKQETGTVEGQATSGEEEEKKKQKRGGRGQIKQKKKTVPQRITIAKIPRAKKKYVTRVCGLATFEIELKDAQRFFAQKFSCGASVTGEDEIIIQGDFTDDIIDVIQEKWPEVDDDSIEDLGEVKK</sequence>